<organism>
    <name type="scientific">Arabidopsis thaliana</name>
    <name type="common">Mouse-ear cress</name>
    <dbReference type="NCBI Taxonomy" id="3702"/>
    <lineage>
        <taxon>Eukaryota</taxon>
        <taxon>Viridiplantae</taxon>
        <taxon>Streptophyta</taxon>
        <taxon>Embryophyta</taxon>
        <taxon>Tracheophyta</taxon>
        <taxon>Spermatophyta</taxon>
        <taxon>Magnoliopsida</taxon>
        <taxon>eudicotyledons</taxon>
        <taxon>Gunneridae</taxon>
        <taxon>Pentapetalae</taxon>
        <taxon>rosids</taxon>
        <taxon>malvids</taxon>
        <taxon>Brassicales</taxon>
        <taxon>Brassicaceae</taxon>
        <taxon>Camelineae</taxon>
        <taxon>Arabidopsis</taxon>
    </lineage>
</organism>
<name>PP210_ARATH</name>
<comment type="similarity">
    <text evidence="1">Belongs to the PPR family. PCMP-H subfamily.</text>
</comment>
<comment type="online information" name="Pentatricopeptide repeat proteins">
    <link uri="https://ppr.plantenergy.uwa.edu.au"/>
</comment>
<feature type="chain" id="PRO_0000356069" description="Pentatricopeptide repeat-containing protein At3g03580">
    <location>
        <begin position="1"/>
        <end position="882"/>
    </location>
</feature>
<feature type="repeat" description="PPR 1">
    <location>
        <begin position="3"/>
        <end position="37"/>
    </location>
</feature>
<feature type="repeat" description="PPR 2">
    <location>
        <begin position="38"/>
        <end position="68"/>
    </location>
</feature>
<feature type="repeat" description="PPR 3">
    <location>
        <begin position="70"/>
        <end position="104"/>
    </location>
</feature>
<feature type="repeat" description="PPR 4">
    <location>
        <begin position="105"/>
        <end position="139"/>
    </location>
</feature>
<feature type="repeat" description="PPR 5">
    <location>
        <begin position="140"/>
        <end position="170"/>
    </location>
</feature>
<feature type="repeat" description="PPR 6">
    <location>
        <begin position="171"/>
        <end position="205"/>
    </location>
</feature>
<feature type="repeat" description="PPR 7">
    <location>
        <begin position="206"/>
        <end position="240"/>
    </location>
</feature>
<feature type="repeat" description="PPR 8">
    <location>
        <begin position="241"/>
        <end position="271"/>
    </location>
</feature>
<feature type="repeat" description="PPR 9">
    <location>
        <begin position="272"/>
        <end position="307"/>
    </location>
</feature>
<feature type="repeat" description="PPR 10">
    <location>
        <begin position="309"/>
        <end position="340"/>
    </location>
</feature>
<feature type="repeat" description="PPR 11">
    <location>
        <begin position="341"/>
        <end position="371"/>
    </location>
</feature>
<feature type="repeat" description="PPR 12">
    <location>
        <begin position="372"/>
        <end position="406"/>
    </location>
</feature>
<feature type="repeat" description="PPR 13">
    <location>
        <begin position="407"/>
        <end position="441"/>
    </location>
</feature>
<feature type="repeat" description="PPR 14">
    <location>
        <begin position="442"/>
        <end position="472"/>
    </location>
</feature>
<feature type="repeat" description="PPR 15">
    <location>
        <begin position="473"/>
        <end position="507"/>
    </location>
</feature>
<feature type="repeat" description="PPR 16">
    <location>
        <begin position="508"/>
        <end position="542"/>
    </location>
</feature>
<feature type="repeat" description="PPR 17">
    <location>
        <begin position="543"/>
        <end position="573"/>
    </location>
</feature>
<feature type="repeat" description="PPR 18">
    <location>
        <begin position="574"/>
        <end position="608"/>
    </location>
</feature>
<feature type="repeat" description="PPR 19">
    <location>
        <begin position="609"/>
        <end position="639"/>
    </location>
</feature>
<feature type="repeat" description="PPR 20">
    <location>
        <begin position="645"/>
        <end position="675"/>
    </location>
</feature>
<feature type="region of interest" description="Type E motif">
    <location>
        <begin position="680"/>
        <end position="755"/>
    </location>
</feature>
<feature type="region of interest" description="Type E(+) motif">
    <location>
        <begin position="756"/>
        <end position="786"/>
    </location>
</feature>
<feature type="region of interest" description="Type DYW motif">
    <location>
        <begin position="787"/>
        <end position="882"/>
    </location>
</feature>
<reference key="1">
    <citation type="journal article" date="2000" name="Nature">
        <title>Sequence and analysis of chromosome 3 of the plant Arabidopsis thaliana.</title>
        <authorList>
            <person name="Salanoubat M."/>
            <person name="Lemcke K."/>
            <person name="Rieger M."/>
            <person name="Ansorge W."/>
            <person name="Unseld M."/>
            <person name="Fartmann B."/>
            <person name="Valle G."/>
            <person name="Bloecker H."/>
            <person name="Perez-Alonso M."/>
            <person name="Obermaier B."/>
            <person name="Delseny M."/>
            <person name="Boutry M."/>
            <person name="Grivell L.A."/>
            <person name="Mache R."/>
            <person name="Puigdomenech P."/>
            <person name="De Simone V."/>
            <person name="Choisne N."/>
            <person name="Artiguenave F."/>
            <person name="Robert C."/>
            <person name="Brottier P."/>
            <person name="Wincker P."/>
            <person name="Cattolico L."/>
            <person name="Weissenbach J."/>
            <person name="Saurin W."/>
            <person name="Quetier F."/>
            <person name="Schaefer M."/>
            <person name="Mueller-Auer S."/>
            <person name="Gabel C."/>
            <person name="Fuchs M."/>
            <person name="Benes V."/>
            <person name="Wurmbach E."/>
            <person name="Drzonek H."/>
            <person name="Erfle H."/>
            <person name="Jordan N."/>
            <person name="Bangert S."/>
            <person name="Wiedelmann R."/>
            <person name="Kranz H."/>
            <person name="Voss H."/>
            <person name="Holland R."/>
            <person name="Brandt P."/>
            <person name="Nyakatura G."/>
            <person name="Vezzi A."/>
            <person name="D'Angelo M."/>
            <person name="Pallavicini A."/>
            <person name="Toppo S."/>
            <person name="Simionati B."/>
            <person name="Conrad A."/>
            <person name="Hornischer K."/>
            <person name="Kauer G."/>
            <person name="Loehnert T.-H."/>
            <person name="Nordsiek G."/>
            <person name="Reichelt J."/>
            <person name="Scharfe M."/>
            <person name="Schoen O."/>
            <person name="Bargues M."/>
            <person name="Terol J."/>
            <person name="Climent J."/>
            <person name="Navarro P."/>
            <person name="Collado C."/>
            <person name="Perez-Perez A."/>
            <person name="Ottenwaelder B."/>
            <person name="Duchemin D."/>
            <person name="Cooke R."/>
            <person name="Laudie M."/>
            <person name="Berger-Llauro C."/>
            <person name="Purnelle B."/>
            <person name="Masuy D."/>
            <person name="de Haan M."/>
            <person name="Maarse A.C."/>
            <person name="Alcaraz J.-P."/>
            <person name="Cottet A."/>
            <person name="Casacuberta E."/>
            <person name="Monfort A."/>
            <person name="Argiriou A."/>
            <person name="Flores M."/>
            <person name="Liguori R."/>
            <person name="Vitale D."/>
            <person name="Mannhaupt G."/>
            <person name="Haase D."/>
            <person name="Schoof H."/>
            <person name="Rudd S."/>
            <person name="Zaccaria P."/>
            <person name="Mewes H.-W."/>
            <person name="Mayer K.F.X."/>
            <person name="Kaul S."/>
            <person name="Town C.D."/>
            <person name="Koo H.L."/>
            <person name="Tallon L.J."/>
            <person name="Jenkins J."/>
            <person name="Rooney T."/>
            <person name="Rizzo M."/>
            <person name="Walts A."/>
            <person name="Utterback T."/>
            <person name="Fujii C.Y."/>
            <person name="Shea T.P."/>
            <person name="Creasy T.H."/>
            <person name="Haas B."/>
            <person name="Maiti R."/>
            <person name="Wu D."/>
            <person name="Peterson J."/>
            <person name="Van Aken S."/>
            <person name="Pai G."/>
            <person name="Militscher J."/>
            <person name="Sellers P."/>
            <person name="Gill J.E."/>
            <person name="Feldblyum T.V."/>
            <person name="Preuss D."/>
            <person name="Lin X."/>
            <person name="Nierman W.C."/>
            <person name="Salzberg S.L."/>
            <person name="White O."/>
            <person name="Venter J.C."/>
            <person name="Fraser C.M."/>
            <person name="Kaneko T."/>
            <person name="Nakamura Y."/>
            <person name="Sato S."/>
            <person name="Kato T."/>
            <person name="Asamizu E."/>
            <person name="Sasamoto S."/>
            <person name="Kimura T."/>
            <person name="Idesawa K."/>
            <person name="Kawashima K."/>
            <person name="Kishida Y."/>
            <person name="Kiyokawa C."/>
            <person name="Kohara M."/>
            <person name="Matsumoto M."/>
            <person name="Matsuno A."/>
            <person name="Muraki A."/>
            <person name="Nakayama S."/>
            <person name="Nakazaki N."/>
            <person name="Shinpo S."/>
            <person name="Takeuchi C."/>
            <person name="Wada T."/>
            <person name="Watanabe A."/>
            <person name="Yamada M."/>
            <person name="Yasuda M."/>
            <person name="Tabata S."/>
        </authorList>
    </citation>
    <scope>NUCLEOTIDE SEQUENCE [LARGE SCALE GENOMIC DNA]</scope>
    <source>
        <strain>cv. Columbia</strain>
    </source>
</reference>
<reference key="2">
    <citation type="journal article" date="2017" name="Plant J.">
        <title>Araport11: a complete reannotation of the Arabidopsis thaliana reference genome.</title>
        <authorList>
            <person name="Cheng C.Y."/>
            <person name="Krishnakumar V."/>
            <person name="Chan A.P."/>
            <person name="Thibaud-Nissen F."/>
            <person name="Schobel S."/>
            <person name="Town C.D."/>
        </authorList>
    </citation>
    <scope>GENOME REANNOTATION</scope>
    <source>
        <strain>cv. Columbia</strain>
    </source>
</reference>
<reference key="3">
    <citation type="journal article" date="2003" name="Science">
        <title>Empirical analysis of transcriptional activity in the Arabidopsis genome.</title>
        <authorList>
            <person name="Yamada K."/>
            <person name="Lim J."/>
            <person name="Dale J.M."/>
            <person name="Chen H."/>
            <person name="Shinn P."/>
            <person name="Palm C.J."/>
            <person name="Southwick A.M."/>
            <person name="Wu H.C."/>
            <person name="Kim C.J."/>
            <person name="Nguyen M."/>
            <person name="Pham P.K."/>
            <person name="Cheuk R.F."/>
            <person name="Karlin-Newmann G."/>
            <person name="Liu S.X."/>
            <person name="Lam B."/>
            <person name="Sakano H."/>
            <person name="Wu T."/>
            <person name="Yu G."/>
            <person name="Miranda M."/>
            <person name="Quach H.L."/>
            <person name="Tripp M."/>
            <person name="Chang C.H."/>
            <person name="Lee J.M."/>
            <person name="Toriumi M.J."/>
            <person name="Chan M.M."/>
            <person name="Tang C.C."/>
            <person name="Onodera C.S."/>
            <person name="Deng J.M."/>
            <person name="Akiyama K."/>
            <person name="Ansari Y."/>
            <person name="Arakawa T."/>
            <person name="Banh J."/>
            <person name="Banno F."/>
            <person name="Bowser L."/>
            <person name="Brooks S.Y."/>
            <person name="Carninci P."/>
            <person name="Chao Q."/>
            <person name="Choy N."/>
            <person name="Enju A."/>
            <person name="Goldsmith A.D."/>
            <person name="Gurjal M."/>
            <person name="Hansen N.F."/>
            <person name="Hayashizaki Y."/>
            <person name="Johnson-Hopson C."/>
            <person name="Hsuan V.W."/>
            <person name="Iida K."/>
            <person name="Karnes M."/>
            <person name="Khan S."/>
            <person name="Koesema E."/>
            <person name="Ishida J."/>
            <person name="Jiang P.X."/>
            <person name="Jones T."/>
            <person name="Kawai J."/>
            <person name="Kamiya A."/>
            <person name="Meyers C."/>
            <person name="Nakajima M."/>
            <person name="Narusaka M."/>
            <person name="Seki M."/>
            <person name="Sakurai T."/>
            <person name="Satou M."/>
            <person name="Tamse R."/>
            <person name="Vaysberg M."/>
            <person name="Wallender E.K."/>
            <person name="Wong C."/>
            <person name="Yamamura Y."/>
            <person name="Yuan S."/>
            <person name="Shinozaki K."/>
            <person name="Davis R.W."/>
            <person name="Theologis A."/>
            <person name="Ecker J.R."/>
        </authorList>
    </citation>
    <scope>NUCLEOTIDE SEQUENCE [LARGE SCALE MRNA]</scope>
    <source>
        <strain>cv. Columbia</strain>
    </source>
</reference>
<reference key="4">
    <citation type="journal article" date="2004" name="Plant Cell">
        <title>Genome-wide analysis of Arabidopsis pentatricopeptide repeat proteins reveals their essential role in organelle biogenesis.</title>
        <authorList>
            <person name="Lurin C."/>
            <person name="Andres C."/>
            <person name="Aubourg S."/>
            <person name="Bellaoui M."/>
            <person name="Bitton F."/>
            <person name="Bruyere C."/>
            <person name="Caboche M."/>
            <person name="Debast C."/>
            <person name="Gualberto J."/>
            <person name="Hoffmann B."/>
            <person name="Lecharny A."/>
            <person name="Le Ret M."/>
            <person name="Martin-Magniette M.-L."/>
            <person name="Mireau H."/>
            <person name="Peeters N."/>
            <person name="Renou J.-P."/>
            <person name="Szurek B."/>
            <person name="Taconnat L."/>
            <person name="Small I."/>
        </authorList>
    </citation>
    <scope>GENE FAMILY</scope>
</reference>
<evidence type="ECO:0000305" key="1"/>
<gene>
    <name type="primary">PCMP-H23</name>
    <name type="ordered locus">At3g03580</name>
    <name type="ORF">T12J13.14</name>
</gene>
<dbReference type="EMBL" id="AC009327">
    <property type="protein sequence ID" value="AAF03474.1"/>
    <property type="molecule type" value="Genomic_DNA"/>
</dbReference>
<dbReference type="EMBL" id="CP002686">
    <property type="protein sequence ID" value="AEE73959.1"/>
    <property type="molecule type" value="Genomic_DNA"/>
</dbReference>
<dbReference type="EMBL" id="BT004278">
    <property type="protein sequence ID" value="AAO42278.1"/>
    <property type="molecule type" value="mRNA"/>
</dbReference>
<dbReference type="EMBL" id="BT006153">
    <property type="protein sequence ID" value="AAP04138.1"/>
    <property type="molecule type" value="mRNA"/>
</dbReference>
<dbReference type="RefSeq" id="NP_187008.1">
    <property type="nucleotide sequence ID" value="NM_111229.3"/>
</dbReference>
<dbReference type="SMR" id="Q9SS60"/>
<dbReference type="FunCoup" id="Q9SS60">
    <property type="interactions" value="90"/>
</dbReference>
<dbReference type="STRING" id="3702.Q9SS60"/>
<dbReference type="PaxDb" id="3702-AT3G03580.1"/>
<dbReference type="ProteomicsDB" id="249088"/>
<dbReference type="EnsemblPlants" id="AT3G03580.1">
    <property type="protein sequence ID" value="AT3G03580.1"/>
    <property type="gene ID" value="AT3G03580"/>
</dbReference>
<dbReference type="GeneID" id="821229"/>
<dbReference type="Gramene" id="AT3G03580.1">
    <property type="protein sequence ID" value="AT3G03580.1"/>
    <property type="gene ID" value="AT3G03580"/>
</dbReference>
<dbReference type="KEGG" id="ath:AT3G03580"/>
<dbReference type="Araport" id="AT3G03580"/>
<dbReference type="TAIR" id="AT3G03580">
    <property type="gene designation" value="MEF26"/>
</dbReference>
<dbReference type="eggNOG" id="KOG4197">
    <property type="taxonomic scope" value="Eukaryota"/>
</dbReference>
<dbReference type="HOGENOM" id="CLU_002706_15_1_1"/>
<dbReference type="InParanoid" id="Q9SS60"/>
<dbReference type="OMA" id="GMYGEGK"/>
<dbReference type="PhylomeDB" id="Q9SS60"/>
<dbReference type="PRO" id="PR:Q9SS60"/>
<dbReference type="Proteomes" id="UP000006548">
    <property type="component" value="Chromosome 3"/>
</dbReference>
<dbReference type="ExpressionAtlas" id="Q9SS60">
    <property type="expression patterns" value="baseline and differential"/>
</dbReference>
<dbReference type="GO" id="GO:0003723">
    <property type="term" value="F:RNA binding"/>
    <property type="evidence" value="ECO:0007669"/>
    <property type="project" value="InterPro"/>
</dbReference>
<dbReference type="GO" id="GO:0008270">
    <property type="term" value="F:zinc ion binding"/>
    <property type="evidence" value="ECO:0007669"/>
    <property type="project" value="InterPro"/>
</dbReference>
<dbReference type="GO" id="GO:0009451">
    <property type="term" value="P:RNA modification"/>
    <property type="evidence" value="ECO:0007669"/>
    <property type="project" value="InterPro"/>
</dbReference>
<dbReference type="FunFam" id="1.25.40.10:FF:000464">
    <property type="entry name" value="Pentatricopeptide repeat-containing protein"/>
    <property type="match status" value="1"/>
</dbReference>
<dbReference type="FunFam" id="1.25.40.10:FF:001508">
    <property type="entry name" value="Pentatricopeptide repeat-containing protein"/>
    <property type="match status" value="1"/>
</dbReference>
<dbReference type="FunFam" id="1.25.40.10:FF:001226">
    <property type="entry name" value="Pentatricopeptide repeat-containing protein At3g03580"/>
    <property type="match status" value="1"/>
</dbReference>
<dbReference type="FunFam" id="1.25.40.10:FF:000725">
    <property type="entry name" value="Pentatricopeptide repeat-containing protein At3g63370, chloroplastic"/>
    <property type="match status" value="1"/>
</dbReference>
<dbReference type="FunFam" id="1.25.40.10:FF:000073">
    <property type="entry name" value="Pentatricopeptide repeat-containing protein chloroplastic"/>
    <property type="match status" value="1"/>
</dbReference>
<dbReference type="FunFam" id="1.25.40.10:FF:000090">
    <property type="entry name" value="Pentatricopeptide repeat-containing protein, chloroplastic"/>
    <property type="match status" value="1"/>
</dbReference>
<dbReference type="Gene3D" id="1.25.40.10">
    <property type="entry name" value="Tetratricopeptide repeat domain"/>
    <property type="match status" value="6"/>
</dbReference>
<dbReference type="InterPro" id="IPR032867">
    <property type="entry name" value="DYW_dom"/>
</dbReference>
<dbReference type="InterPro" id="IPR046848">
    <property type="entry name" value="E_motif"/>
</dbReference>
<dbReference type="InterPro" id="IPR002885">
    <property type="entry name" value="Pentatricopeptide_rpt"/>
</dbReference>
<dbReference type="InterPro" id="IPR046960">
    <property type="entry name" value="PPR_At4g14850-like_plant"/>
</dbReference>
<dbReference type="InterPro" id="IPR011990">
    <property type="entry name" value="TPR-like_helical_dom_sf"/>
</dbReference>
<dbReference type="NCBIfam" id="TIGR00756">
    <property type="entry name" value="PPR"/>
    <property type="match status" value="8"/>
</dbReference>
<dbReference type="PANTHER" id="PTHR47926:SF533">
    <property type="entry name" value="DYW DOMAIN-CONTAINING PROTEIN"/>
    <property type="match status" value="1"/>
</dbReference>
<dbReference type="PANTHER" id="PTHR47926">
    <property type="entry name" value="PENTATRICOPEPTIDE REPEAT-CONTAINING PROTEIN"/>
    <property type="match status" value="1"/>
</dbReference>
<dbReference type="Pfam" id="PF14432">
    <property type="entry name" value="DYW_deaminase"/>
    <property type="match status" value="1"/>
</dbReference>
<dbReference type="Pfam" id="PF20431">
    <property type="entry name" value="E_motif"/>
    <property type="match status" value="1"/>
</dbReference>
<dbReference type="Pfam" id="PF01535">
    <property type="entry name" value="PPR"/>
    <property type="match status" value="3"/>
</dbReference>
<dbReference type="Pfam" id="PF13041">
    <property type="entry name" value="PPR_2"/>
    <property type="match status" value="5"/>
</dbReference>
<dbReference type="SUPFAM" id="SSF48452">
    <property type="entry name" value="TPR-like"/>
    <property type="match status" value="1"/>
</dbReference>
<dbReference type="PROSITE" id="PS51375">
    <property type="entry name" value="PPR"/>
    <property type="match status" value="17"/>
</dbReference>
<accession>Q9SS60</accession>
<sequence>MQTRVSSPFISRALSSSSNLNELRRIHALVISLGLDSSDFFSGKLIDKYSHFREPASSLSVFRRVSPAKNVYLWNSIIRAFSKNGLFPEALEFYGKLRESKVSPDKYTFPSVIKACAGLFDAEMGDLVYEQILDMGFESDLFVGNALVDMYSRMGLLTRARQVFDEMPVRDLVSWNSLISGYSSHGYYEEALEIYHELKNSWIVPDSFTVSSVLPAFGNLLVVKQGQGLHGFALKSGVNSVVVVNNGLVAMYLKFRRPTDARRVFDEMDVRDSVSYNTMICGYLKLEMVEESVRMFLENLDQFKPDLLTVSSVLRACGHLRDLSLAKYIYNYMLKAGFVLESTVRNILIDVYAKCGDMITARDVFNSMECKDTVSWNSIISGYIQSGDLMEAMKLFKMMMIMEEQADHITYLMLISVSTRLADLKFGKGLHSNGIKSGICIDLSVSNALIDMYAKCGEVGDSLKIFSSMGTGDTVTWNTVISACVRFGDFATGLQVTTQMRKSEVVPDMATFLVTLPMCASLAAKRLGKEIHCCLLRFGYESELQIGNALIEMYSKCGCLENSSRVFERMSRRDVVTWTGMIYAYGMYGEGEKALETFADMEKSGIVPDSVVFIAIIYACSHSGLVDEGLACFEKMKTHYKIDPMIEHYACVVDLLSRSQKISKAEEFIQAMPIKPDASIWASVLRACRTSGDMETAERVSRRIIELNPDDPGYSILASNAYAALRKWDKVSLIRKSLKDKHITKNPGYSWIEVGKNVHVFSSGDDSAPQSEAIYKSLEILYSLMAKEGYIPDPREVSQNLEEEEEKRRLICGHSERLAIAFGLLNTEPGTPLQVMKNLRVCGDCHEVTKLISKIVGREILVRDANRFHLFKDGTCSCKDRW</sequence>
<keyword id="KW-1185">Reference proteome</keyword>
<keyword id="KW-0677">Repeat</keyword>
<proteinExistence type="evidence at transcript level"/>
<protein>
    <recommendedName>
        <fullName>Pentatricopeptide repeat-containing protein At3g03580</fullName>
    </recommendedName>
</protein>